<comment type="function">
    <text evidence="1">Has an important function as a repair enzyme for proteins that have been inactivated by oxidation. Catalyzes the reversible oxidation-reduction of methionine sulfoxide in proteins to methionine.</text>
</comment>
<comment type="catalytic activity">
    <reaction evidence="1">
        <text>L-methionyl-[protein] + [thioredoxin]-disulfide + H2O = L-methionyl-(S)-S-oxide-[protein] + [thioredoxin]-dithiol</text>
        <dbReference type="Rhea" id="RHEA:14217"/>
        <dbReference type="Rhea" id="RHEA-COMP:10698"/>
        <dbReference type="Rhea" id="RHEA-COMP:10700"/>
        <dbReference type="Rhea" id="RHEA-COMP:12313"/>
        <dbReference type="Rhea" id="RHEA-COMP:12315"/>
        <dbReference type="ChEBI" id="CHEBI:15377"/>
        <dbReference type="ChEBI" id="CHEBI:16044"/>
        <dbReference type="ChEBI" id="CHEBI:29950"/>
        <dbReference type="ChEBI" id="CHEBI:44120"/>
        <dbReference type="ChEBI" id="CHEBI:50058"/>
        <dbReference type="EC" id="1.8.4.11"/>
    </reaction>
</comment>
<comment type="catalytic activity">
    <reaction evidence="1">
        <text>[thioredoxin]-disulfide + L-methionine + H2O = L-methionine (S)-S-oxide + [thioredoxin]-dithiol</text>
        <dbReference type="Rhea" id="RHEA:19993"/>
        <dbReference type="Rhea" id="RHEA-COMP:10698"/>
        <dbReference type="Rhea" id="RHEA-COMP:10700"/>
        <dbReference type="ChEBI" id="CHEBI:15377"/>
        <dbReference type="ChEBI" id="CHEBI:29950"/>
        <dbReference type="ChEBI" id="CHEBI:50058"/>
        <dbReference type="ChEBI" id="CHEBI:57844"/>
        <dbReference type="ChEBI" id="CHEBI:58772"/>
        <dbReference type="EC" id="1.8.4.11"/>
    </reaction>
</comment>
<comment type="similarity">
    <text evidence="1">Belongs to the MsrA Met sulfoxide reductase family.</text>
</comment>
<reference key="1">
    <citation type="journal article" date="2009" name="Appl. Environ. Microbiol.">
        <title>Three genomes from the phylum Acidobacteria provide insight into the lifestyles of these microorganisms in soils.</title>
        <authorList>
            <person name="Ward N.L."/>
            <person name="Challacombe J.F."/>
            <person name="Janssen P.H."/>
            <person name="Henrissat B."/>
            <person name="Coutinho P.M."/>
            <person name="Wu M."/>
            <person name="Xie G."/>
            <person name="Haft D.H."/>
            <person name="Sait M."/>
            <person name="Badger J."/>
            <person name="Barabote R.D."/>
            <person name="Bradley B."/>
            <person name="Brettin T.S."/>
            <person name="Brinkac L.M."/>
            <person name="Bruce D."/>
            <person name="Creasy T."/>
            <person name="Daugherty S.C."/>
            <person name="Davidsen T.M."/>
            <person name="DeBoy R.T."/>
            <person name="Detter J.C."/>
            <person name="Dodson R.J."/>
            <person name="Durkin A.S."/>
            <person name="Ganapathy A."/>
            <person name="Gwinn-Giglio M."/>
            <person name="Han C.S."/>
            <person name="Khouri H."/>
            <person name="Kiss H."/>
            <person name="Kothari S.P."/>
            <person name="Madupu R."/>
            <person name="Nelson K.E."/>
            <person name="Nelson W.C."/>
            <person name="Paulsen I."/>
            <person name="Penn K."/>
            <person name="Ren Q."/>
            <person name="Rosovitz M.J."/>
            <person name="Selengut J.D."/>
            <person name="Shrivastava S."/>
            <person name="Sullivan S.A."/>
            <person name="Tapia R."/>
            <person name="Thompson L.S."/>
            <person name="Watkins K.L."/>
            <person name="Yang Q."/>
            <person name="Yu C."/>
            <person name="Zafar N."/>
            <person name="Zhou L."/>
            <person name="Kuske C.R."/>
        </authorList>
    </citation>
    <scope>NUCLEOTIDE SEQUENCE [LARGE SCALE GENOMIC DNA]</scope>
    <source>
        <strain>ATCC 51196 / DSM 11244 / BCRC 80197 / JCM 7670 / NBRC 15755 / NCIMB 13165 / 161</strain>
    </source>
</reference>
<accession>C1F1B8</accession>
<sequence>MAKATFGAGCFWGVEASFRQLHGVQDVAAGYEGGKLDNPTYRDVCTDLTGHAEVVEIDFNPDEIRFEQLLEAFFGLHDPTQLNRQGPDWGTQYRSVIFYHSPEQQTVAQAFIDRLTAEKRFPRPIVTQVVPAATFWRAEEYHQRYLEKRGLATCHI</sequence>
<evidence type="ECO:0000255" key="1">
    <source>
        <dbReference type="HAMAP-Rule" id="MF_01401"/>
    </source>
</evidence>
<protein>
    <recommendedName>
        <fullName evidence="1">Peptide methionine sulfoxide reductase MsrA</fullName>
        <shortName evidence="1">Protein-methionine-S-oxide reductase</shortName>
        <ecNumber evidence="1">1.8.4.11</ecNumber>
    </recommendedName>
    <alternativeName>
        <fullName evidence="1">Peptide-methionine (S)-S-oxide reductase</fullName>
        <shortName evidence="1">Peptide Met(O) reductase</shortName>
    </alternativeName>
</protein>
<proteinExistence type="inferred from homology"/>
<feature type="chain" id="PRO_1000184557" description="Peptide methionine sulfoxide reductase MsrA">
    <location>
        <begin position="1"/>
        <end position="156"/>
    </location>
</feature>
<feature type="active site" evidence="1">
    <location>
        <position position="10"/>
    </location>
</feature>
<keyword id="KW-0560">Oxidoreductase</keyword>
<keyword id="KW-1185">Reference proteome</keyword>
<organism>
    <name type="scientific">Acidobacterium capsulatum (strain ATCC 51196 / DSM 11244 / BCRC 80197 / JCM 7670 / NBRC 15755 / NCIMB 13165 / 161)</name>
    <dbReference type="NCBI Taxonomy" id="240015"/>
    <lineage>
        <taxon>Bacteria</taxon>
        <taxon>Pseudomonadati</taxon>
        <taxon>Acidobacteriota</taxon>
        <taxon>Terriglobia</taxon>
        <taxon>Terriglobales</taxon>
        <taxon>Acidobacteriaceae</taxon>
        <taxon>Acidobacterium</taxon>
    </lineage>
</organism>
<name>MSRA_ACIC5</name>
<gene>
    <name evidence="1" type="primary">msrA</name>
    <name type="ordered locus">ACP_2424</name>
</gene>
<dbReference type="EC" id="1.8.4.11" evidence="1"/>
<dbReference type="EMBL" id="CP001472">
    <property type="protein sequence ID" value="ACO31447.1"/>
    <property type="molecule type" value="Genomic_DNA"/>
</dbReference>
<dbReference type="RefSeq" id="WP_015897508.1">
    <property type="nucleotide sequence ID" value="NC_012483.1"/>
</dbReference>
<dbReference type="SMR" id="C1F1B8"/>
<dbReference type="FunCoup" id="C1F1B8">
    <property type="interactions" value="495"/>
</dbReference>
<dbReference type="STRING" id="240015.ACP_2424"/>
<dbReference type="KEGG" id="aca:ACP_2424"/>
<dbReference type="eggNOG" id="COG0225">
    <property type="taxonomic scope" value="Bacteria"/>
</dbReference>
<dbReference type="HOGENOM" id="CLU_031040_10_0_0"/>
<dbReference type="InParanoid" id="C1F1B8"/>
<dbReference type="OrthoDB" id="4174719at2"/>
<dbReference type="Proteomes" id="UP000002207">
    <property type="component" value="Chromosome"/>
</dbReference>
<dbReference type="GO" id="GO:0033744">
    <property type="term" value="F:L-methionine:thioredoxin-disulfide S-oxidoreductase activity"/>
    <property type="evidence" value="ECO:0007669"/>
    <property type="project" value="RHEA"/>
</dbReference>
<dbReference type="GO" id="GO:0008113">
    <property type="term" value="F:peptide-methionine (S)-S-oxide reductase activity"/>
    <property type="evidence" value="ECO:0007669"/>
    <property type="project" value="UniProtKB-UniRule"/>
</dbReference>
<dbReference type="GO" id="GO:0036211">
    <property type="term" value="P:protein modification process"/>
    <property type="evidence" value="ECO:0007669"/>
    <property type="project" value="UniProtKB-UniRule"/>
</dbReference>
<dbReference type="Gene3D" id="3.30.1060.10">
    <property type="entry name" value="Peptide methionine sulphoxide reductase MsrA"/>
    <property type="match status" value="1"/>
</dbReference>
<dbReference type="HAMAP" id="MF_01401">
    <property type="entry name" value="MsrA"/>
    <property type="match status" value="1"/>
</dbReference>
<dbReference type="InterPro" id="IPR002569">
    <property type="entry name" value="Met_Sox_Rdtase_MsrA_dom"/>
</dbReference>
<dbReference type="InterPro" id="IPR036509">
    <property type="entry name" value="Met_Sox_Rdtase_MsrA_sf"/>
</dbReference>
<dbReference type="NCBIfam" id="TIGR00401">
    <property type="entry name" value="msrA"/>
    <property type="match status" value="1"/>
</dbReference>
<dbReference type="PANTHER" id="PTHR43774">
    <property type="entry name" value="PEPTIDE METHIONINE SULFOXIDE REDUCTASE"/>
    <property type="match status" value="1"/>
</dbReference>
<dbReference type="PANTHER" id="PTHR43774:SF1">
    <property type="entry name" value="PEPTIDE METHIONINE SULFOXIDE REDUCTASE MSRA 2"/>
    <property type="match status" value="1"/>
</dbReference>
<dbReference type="Pfam" id="PF01625">
    <property type="entry name" value="PMSR"/>
    <property type="match status" value="1"/>
</dbReference>
<dbReference type="SUPFAM" id="SSF55068">
    <property type="entry name" value="Peptide methionine sulfoxide reductase"/>
    <property type="match status" value="1"/>
</dbReference>